<organism>
    <name type="scientific">Galago senegalensis</name>
    <name type="common">Northern lesser bushbaby</name>
    <name type="synonym">Senegal bushbaby</name>
    <dbReference type="NCBI Taxonomy" id="9465"/>
    <lineage>
        <taxon>Eukaryota</taxon>
        <taxon>Metazoa</taxon>
        <taxon>Chordata</taxon>
        <taxon>Craniata</taxon>
        <taxon>Vertebrata</taxon>
        <taxon>Euteleostomi</taxon>
        <taxon>Mammalia</taxon>
        <taxon>Eutheria</taxon>
        <taxon>Euarchontoglires</taxon>
        <taxon>Primates</taxon>
        <taxon>Strepsirrhini</taxon>
        <taxon>Lorisiformes</taxon>
        <taxon>Galagidae</taxon>
        <taxon>Galago</taxon>
    </lineage>
</organism>
<reference key="1">
    <citation type="journal article" date="2003" name="Am. J. Phys. Anthropol.">
        <title>Evolution of a pigmentation gene, the melanocortin-1 receptor, in primates.</title>
        <authorList>
            <person name="Mundy N.I."/>
            <person name="Kelly J."/>
        </authorList>
    </citation>
    <scope>NUCLEOTIDE SEQUENCE [GENOMIC DNA]</scope>
    <source>
        <strain>Isolate 4</strain>
    </source>
</reference>
<gene>
    <name type="primary">MC1R</name>
</gene>
<proteinExistence type="inferred from homology"/>
<evidence type="ECO:0000250" key="1">
    <source>
        <dbReference type="UniProtKB" id="Q01726"/>
    </source>
</evidence>
<evidence type="ECO:0000255" key="2"/>
<evidence type="ECO:0000255" key="3">
    <source>
        <dbReference type="PROSITE-ProRule" id="PRU00521"/>
    </source>
</evidence>
<feature type="chain" id="PRO_0000069813" description="Melanocyte-stimulating hormone receptor">
    <location>
        <begin position="1"/>
        <end position="317"/>
    </location>
</feature>
<feature type="topological domain" description="Extracellular" evidence="2">
    <location>
        <begin position="1"/>
        <end position="37"/>
    </location>
</feature>
<feature type="transmembrane region" description="Helical; Name=1" evidence="2">
    <location>
        <begin position="38"/>
        <end position="63"/>
    </location>
</feature>
<feature type="topological domain" description="Cytoplasmic" evidence="2">
    <location>
        <begin position="64"/>
        <end position="72"/>
    </location>
</feature>
<feature type="transmembrane region" description="Helical; Name=2" evidence="2">
    <location>
        <begin position="73"/>
        <end position="93"/>
    </location>
</feature>
<feature type="topological domain" description="Extracellular" evidence="2">
    <location>
        <begin position="94"/>
        <end position="118"/>
    </location>
</feature>
<feature type="transmembrane region" description="Helical; Name=3" evidence="2">
    <location>
        <begin position="119"/>
        <end position="140"/>
    </location>
</feature>
<feature type="topological domain" description="Cytoplasmic" evidence="2">
    <location>
        <begin position="141"/>
        <end position="163"/>
    </location>
</feature>
<feature type="transmembrane region" description="Helical; Name=4" evidence="2">
    <location>
        <begin position="164"/>
        <end position="183"/>
    </location>
</feature>
<feature type="topological domain" description="Extracellular" evidence="2">
    <location>
        <begin position="184"/>
        <end position="191"/>
    </location>
</feature>
<feature type="transmembrane region" description="Helical; Name=5" evidence="2">
    <location>
        <begin position="192"/>
        <end position="211"/>
    </location>
</feature>
<feature type="topological domain" description="Cytoplasmic" evidence="2">
    <location>
        <begin position="212"/>
        <end position="240"/>
    </location>
</feature>
<feature type="transmembrane region" description="Helical; Name=6" evidence="2">
    <location>
        <begin position="241"/>
        <end position="266"/>
    </location>
</feature>
<feature type="topological domain" description="Extracellular" evidence="2">
    <location>
        <begin position="267"/>
        <end position="279"/>
    </location>
</feature>
<feature type="transmembrane region" description="Helical; Name=7" evidence="2">
    <location>
        <begin position="280"/>
        <end position="300"/>
    </location>
</feature>
<feature type="topological domain" description="Cytoplasmic" evidence="2">
    <location>
        <begin position="301"/>
        <end position="317"/>
    </location>
</feature>
<feature type="glycosylation site" description="N-linked (GlcNAc...) asparagine" evidence="2">
    <location>
        <position position="15"/>
    </location>
</feature>
<feature type="glycosylation site" description="N-linked (GlcNAc...) asparagine" evidence="2">
    <location>
        <position position="29"/>
    </location>
</feature>
<dbReference type="EMBL" id="AY205138">
    <property type="protein sequence ID" value="AAP31012.1"/>
    <property type="molecule type" value="Genomic_DNA"/>
</dbReference>
<dbReference type="GlyCosmos" id="Q864F9">
    <property type="glycosylation" value="2 sites, No reported glycans"/>
</dbReference>
<dbReference type="GO" id="GO:0005886">
    <property type="term" value="C:plasma membrane"/>
    <property type="evidence" value="ECO:0000250"/>
    <property type="project" value="UniProtKB"/>
</dbReference>
<dbReference type="GO" id="GO:0004980">
    <property type="term" value="F:melanocyte-stimulating hormone receptor activity"/>
    <property type="evidence" value="ECO:0007669"/>
    <property type="project" value="InterPro"/>
</dbReference>
<dbReference type="GO" id="GO:0007189">
    <property type="term" value="P:adenylate cyclase-activating G protein-coupled receptor signaling pathway"/>
    <property type="evidence" value="ECO:0007669"/>
    <property type="project" value="UniProtKB-ARBA"/>
</dbReference>
<dbReference type="FunFam" id="1.20.1070.10:FF:000211">
    <property type="entry name" value="Melanocyte-stimulating hormone receptor"/>
    <property type="match status" value="1"/>
</dbReference>
<dbReference type="Gene3D" id="1.20.1070.10">
    <property type="entry name" value="Rhodopsin 7-helix transmembrane proteins"/>
    <property type="match status" value="1"/>
</dbReference>
<dbReference type="InterPro" id="IPR000276">
    <property type="entry name" value="GPCR_Rhodpsn"/>
</dbReference>
<dbReference type="InterPro" id="IPR017452">
    <property type="entry name" value="GPCR_Rhodpsn_7TM"/>
</dbReference>
<dbReference type="InterPro" id="IPR001671">
    <property type="entry name" value="Melcrt_ACTH_rcpt"/>
</dbReference>
<dbReference type="InterPro" id="IPR000761">
    <property type="entry name" value="MSH_rcpt"/>
</dbReference>
<dbReference type="PANTHER" id="PTHR22750">
    <property type="entry name" value="G-PROTEIN COUPLED RECEPTOR"/>
    <property type="match status" value="1"/>
</dbReference>
<dbReference type="Pfam" id="PF00001">
    <property type="entry name" value="7tm_1"/>
    <property type="match status" value="1"/>
</dbReference>
<dbReference type="PRINTS" id="PR00237">
    <property type="entry name" value="GPCRRHODOPSN"/>
</dbReference>
<dbReference type="PRINTS" id="PR00534">
    <property type="entry name" value="MCRFAMILY"/>
</dbReference>
<dbReference type="PRINTS" id="PR00536">
    <property type="entry name" value="MELNOCYTESHR"/>
</dbReference>
<dbReference type="SMART" id="SM01381">
    <property type="entry name" value="7TM_GPCR_Srsx"/>
    <property type="match status" value="1"/>
</dbReference>
<dbReference type="SUPFAM" id="SSF81321">
    <property type="entry name" value="Family A G protein-coupled receptor-like"/>
    <property type="match status" value="1"/>
</dbReference>
<dbReference type="PROSITE" id="PS00237">
    <property type="entry name" value="G_PROTEIN_RECEP_F1_1"/>
    <property type="match status" value="1"/>
</dbReference>
<dbReference type="PROSITE" id="PS50262">
    <property type="entry name" value="G_PROTEIN_RECEP_F1_2"/>
    <property type="match status" value="1"/>
</dbReference>
<accession>Q864F9</accession>
<protein>
    <recommendedName>
        <fullName>Melanocyte-stimulating hormone receptor</fullName>
        <shortName>MSH-R</shortName>
    </recommendedName>
    <alternativeName>
        <fullName>Melanocortin receptor 1</fullName>
        <shortName>MC1-R</shortName>
    </alternativeName>
</protein>
<sequence>MPAQGSQRSXLGSLNSTLMATPSLGLAANQSGPQCLEVSVPDGLFLCLGLVSLVENMLVVAAIAKNRNLHSPMYCFICCLALSDLLVSISNVLETAVMLLLEAGALAVGATVVQQLDNVIDVLICSSMVSSLCFLGAIAMDRYISIFYALRYHSIVTLSRAQWATAAVWAASILSSTLFIAYYDRTVVLLCLVVFFLAMLVLMAVLYAHMLTQACQHVQGITRLHKRQHLVQQGFGLKGAATLTILLGVFLLCWGPFFLHLTLIAVCPQHPTCSCVFKNFKLFLALIICNAIVDPLIYAFRSQELRKTLKEVLLFSW</sequence>
<name>MSHR_GALSE</name>
<comment type="function">
    <text evidence="1">Receptor for MSH (alpha, beta and gamma) and ACTH. The activity of this receptor is mediated by G proteins which activate adenylate cyclase. Mediates melanogenesis, the production of eumelanin (black/brown) and phaeomelanin (red/yellow), via regulation of cAMP signaling in melanocytes.</text>
</comment>
<comment type="subunit">
    <text evidence="1">Interacts with MGRN1, but does not undergo MGRN1-mediated ubiquitination; this interaction competes with GNAS-binding and thus inhibits agonist-induced cAMP production. Interacts with OPN3; the interaction results in a decrease in MC1R-mediated cAMP signaling and ultimately a decrease in melanin production in melanocytes.</text>
</comment>
<comment type="subcellular location">
    <subcellularLocation>
        <location evidence="1">Cell membrane</location>
        <topology evidence="2">Multi-pass membrane protein</topology>
    </subcellularLocation>
</comment>
<comment type="similarity">
    <text evidence="3">Belongs to the G-protein coupled receptor 1 family.</text>
</comment>
<keyword id="KW-1003">Cell membrane</keyword>
<keyword id="KW-0297">G-protein coupled receptor</keyword>
<keyword id="KW-0325">Glycoprotein</keyword>
<keyword id="KW-0472">Membrane</keyword>
<keyword id="KW-0675">Receptor</keyword>
<keyword id="KW-0807">Transducer</keyword>
<keyword id="KW-0812">Transmembrane</keyword>
<keyword id="KW-1133">Transmembrane helix</keyword>